<dbReference type="EMBL" id="M88773">
    <property type="protein sequence ID" value="AAA31503.1"/>
    <property type="molecule type" value="Genomic_DNA"/>
</dbReference>
<dbReference type="PIR" id="I47066">
    <property type="entry name" value="I47066"/>
</dbReference>
<dbReference type="SMR" id="Q08070"/>
<dbReference type="Proteomes" id="UP000002356">
    <property type="component" value="Unplaced"/>
</dbReference>
<dbReference type="GO" id="GO:0005615">
    <property type="term" value="C:extracellular space"/>
    <property type="evidence" value="ECO:0007669"/>
    <property type="project" value="UniProtKB-KW"/>
</dbReference>
<dbReference type="GO" id="GO:0005125">
    <property type="term" value="F:cytokine activity"/>
    <property type="evidence" value="ECO:0007669"/>
    <property type="project" value="UniProtKB-KW"/>
</dbReference>
<dbReference type="GO" id="GO:0005126">
    <property type="term" value="F:cytokine receptor binding"/>
    <property type="evidence" value="ECO:0007669"/>
    <property type="project" value="InterPro"/>
</dbReference>
<dbReference type="GO" id="GO:0005179">
    <property type="term" value="F:hormone activity"/>
    <property type="evidence" value="ECO:0007669"/>
    <property type="project" value="UniProtKB-KW"/>
</dbReference>
<dbReference type="GO" id="GO:0051607">
    <property type="term" value="P:defense response to virus"/>
    <property type="evidence" value="ECO:0007669"/>
    <property type="project" value="UniProtKB-KW"/>
</dbReference>
<dbReference type="GO" id="GO:0007565">
    <property type="term" value="P:female pregnancy"/>
    <property type="evidence" value="ECO:0007669"/>
    <property type="project" value="UniProtKB-KW"/>
</dbReference>
<dbReference type="CDD" id="cd00095">
    <property type="entry name" value="IFab"/>
    <property type="match status" value="1"/>
</dbReference>
<dbReference type="FunFam" id="1.20.1250.10:FF:000001">
    <property type="entry name" value="Interferon alpha"/>
    <property type="match status" value="1"/>
</dbReference>
<dbReference type="Gene3D" id="1.20.1250.10">
    <property type="match status" value="1"/>
</dbReference>
<dbReference type="InterPro" id="IPR009079">
    <property type="entry name" value="4_helix_cytokine-like_core"/>
</dbReference>
<dbReference type="InterPro" id="IPR000471">
    <property type="entry name" value="Interferon_alpha/beta/delta"/>
</dbReference>
<dbReference type="PANTHER" id="PTHR11691:SF37">
    <property type="entry name" value="INTERFERON OMEGA-1"/>
    <property type="match status" value="1"/>
</dbReference>
<dbReference type="PANTHER" id="PTHR11691">
    <property type="entry name" value="TYPE I INTERFERON"/>
    <property type="match status" value="1"/>
</dbReference>
<dbReference type="Pfam" id="PF00143">
    <property type="entry name" value="Interferon"/>
    <property type="match status" value="1"/>
</dbReference>
<dbReference type="PRINTS" id="PR00266">
    <property type="entry name" value="INTERFERONAB"/>
</dbReference>
<dbReference type="SMART" id="SM00076">
    <property type="entry name" value="IFabd"/>
    <property type="match status" value="1"/>
</dbReference>
<dbReference type="SUPFAM" id="SSF47266">
    <property type="entry name" value="4-helical cytokines"/>
    <property type="match status" value="1"/>
</dbReference>
<dbReference type="PROSITE" id="PS00252">
    <property type="entry name" value="INTERFERON_A_B_D"/>
    <property type="match status" value="1"/>
</dbReference>
<gene>
    <name type="primary">IFNT9</name>
</gene>
<sequence length="195" mass="22127">MAFVLSLLMALVLVSYGPGGSLGCYLSQRLMLDARENLKLLEPMNRLSPHSCLQDRKDFGLPQEMVEGDQLQKDQAFPVLYEMLQQTFNLFHTEHSSAAWDTTLLEQLCTGLQQQLEDLDTCRGQVMGEEDSELGNMDPIVTVKKYFQGIYDYLQEKGYSDCAWEIVRVEMMRALTVSTTLQKRLTKMGGDLNSP</sequence>
<accession>Q08070</accession>
<name>IFNT9_SHEEP</name>
<reference key="1">
    <citation type="journal article" date="1993" name="Biol. Reprod.">
        <title>Differential expression of distinct mRNAs for ovine trophoblast protein-1 and related sheep type I interferons.</title>
        <authorList>
            <person name="Nephew K.P."/>
            <person name="Whaley A.E."/>
            <person name="Christenson R.K."/>
            <person name="Imakawa K."/>
        </authorList>
    </citation>
    <scope>NUCLEOTIDE SEQUENCE [GENOMIC DNA]</scope>
    <source>
        <tissue>Trophectoderm</tissue>
    </source>
</reference>
<reference key="2">
    <citation type="journal article" date="1996" name="Endocrinology">
        <title>Ovine interferon tau suppresses transcription of the estrogen receptor and oxytocin receptor genes in the ovine endometrium.</title>
        <authorList>
            <person name="Spencer T.E."/>
            <person name="Bazer F.W."/>
        </authorList>
    </citation>
    <scope>FUNCTION</scope>
</reference>
<reference key="3">
    <citation type="journal article" date="1994" name="Protein Eng.">
        <title>Predicted structural motif of IFN tau.</title>
        <authorList>
            <person name="Jarpe M.A."/>
            <person name="Johnson H.M."/>
            <person name="Bazer F.W."/>
            <person name="Ott T.L."/>
            <person name="Curto E.V."/>
            <person name="Krishna N.R."/>
            <person name="Pontzer C.H."/>
        </authorList>
    </citation>
    <scope>CIRCULAR DICHROISM ANALYSIS</scope>
    <scope>3D-STRUCTURE MODELING</scope>
</reference>
<reference key="4">
    <citation type="journal article" date="1995" name="J. Interferon Cytokine Res.">
        <title>A three-dimensional model of interferon-tau.</title>
        <authorList>
            <person name="Senda T."/>
            <person name="Saitoh S."/>
            <person name="Mitsui Y."/>
            <person name="Li J."/>
            <person name="Roberts R.M."/>
        </authorList>
    </citation>
    <scope>3D-STRUCTURE MODELING</scope>
</reference>
<reference key="5">
    <citation type="journal article" date="1998" name="Biochimie">
        <title>IFN-tau: a novel subtype I IFN1. Structural characteristics, non-ubiquitous expression, structure-function relationships, a pregnancy hormonal embryonic signal and cross-species therapeutic potentialities.</title>
        <authorList>
            <person name="Martal J.L."/>
            <person name="Chene N.M."/>
            <person name="Huynh L.P."/>
            <person name="L'Haridon R.M."/>
            <person name="Reinaud P.B."/>
            <person name="Guillomot M.W."/>
            <person name="Charlier M.A."/>
            <person name="Charpigny S.Y."/>
        </authorList>
    </citation>
    <scope>REVIEW</scope>
</reference>
<organism>
    <name type="scientific">Ovis aries</name>
    <name type="common">Sheep</name>
    <dbReference type="NCBI Taxonomy" id="9940"/>
    <lineage>
        <taxon>Eukaryota</taxon>
        <taxon>Metazoa</taxon>
        <taxon>Chordata</taxon>
        <taxon>Craniata</taxon>
        <taxon>Vertebrata</taxon>
        <taxon>Euteleostomi</taxon>
        <taxon>Mammalia</taxon>
        <taxon>Eutheria</taxon>
        <taxon>Laurasiatheria</taxon>
        <taxon>Artiodactyla</taxon>
        <taxon>Ruminantia</taxon>
        <taxon>Pecora</taxon>
        <taxon>Bovidae</taxon>
        <taxon>Caprinae</taxon>
        <taxon>Ovis</taxon>
    </lineage>
</organism>
<comment type="function">
    <text evidence="2">Paracrine hormone primarily responsible for maternal recognition of pregnancy. Interacts with endometrial receptors, probably type I interferon receptors, and blocks estrogen receptor expression, preventing the estrogen-induced increase in oxytocin receptor expression in the endometrium. This results in the suppression of the pulsatile endometrial release of the luteolytic hormone prostaglandin F2-alpha, hindering the regression of the corpus luteum (luteolysis) and therefore a return to ovarian cyclicity. This, and a possible direct effect of IFN-tau on prostaglandin synthesis, leads in turn to continued ovarian progesterone secretion, which stimulates the secretion by the endometrium of the nutrients required for the growth of the conceptus. In summary, displays particularly high antiviral and antiproliferative potency concurrently with particular weak cytotoxicity, high antiluteolytic activity and immunomodulatory properties. In contrast with other IFNs, IFN-tau is not virally inducible.</text>
</comment>
<comment type="subcellular location">
    <subcellularLocation>
        <location>Secreted</location>
    </subcellularLocation>
    <text>Secreted into the uterine lumen.</text>
</comment>
<comment type="tissue specificity">
    <text>Constitutively and exclusively expressed in the mononuclear cells of the extraembryonic trophectoderm.</text>
</comment>
<comment type="developmental stage">
    <text>Major secretory product synthesized by the sheep conceptus between days 13 and 21 of pregnancy.</text>
</comment>
<comment type="miscellaneous">
    <text>IFN-tau genes are intronless. They evolved from IFN-omega genes in the ruminantia suborder and have continued to duplicate independently in different lineages of the ruminantia. They code for proteins very similar in sequence but with different biological potency and pattern of expression.</text>
</comment>
<comment type="similarity">
    <text evidence="3">Belongs to the alpha/beta interferon family. IFN-alphaII subfamily.</text>
</comment>
<keyword id="KW-0051">Antiviral defense</keyword>
<keyword id="KW-0202">Cytokine</keyword>
<keyword id="KW-1015">Disulfide bond</keyword>
<keyword id="KW-0372">Hormone</keyword>
<keyword id="KW-0635">Pregnancy</keyword>
<keyword id="KW-1185">Reference proteome</keyword>
<keyword id="KW-0964">Secreted</keyword>
<keyword id="KW-0732">Signal</keyword>
<proteinExistence type="evidence at transcript level"/>
<evidence type="ECO:0000250" key="1"/>
<evidence type="ECO:0000269" key="2">
    <source>
    </source>
</evidence>
<evidence type="ECO:0000305" key="3"/>
<protein>
    <recommendedName>
        <fullName>Interferon tau-9</fullName>
        <shortName>IFN-tau-9</shortName>
    </recommendedName>
    <alternativeName>
        <fullName>Antiluteolysin</fullName>
    </alternativeName>
    <alternativeName>
        <fullName>TP-010</fullName>
    </alternativeName>
    <alternativeName>
        <fullName>Trophoblast antiluteolytic protein</fullName>
    </alternativeName>
    <alternativeName>
        <fullName>Trophoblast protein 1</fullName>
        <shortName>TP-1</shortName>
    </alternativeName>
    <alternativeName>
        <fullName>Trophoblastin</fullName>
    </alternativeName>
</protein>
<feature type="signal peptide" evidence="1">
    <location>
        <begin position="1"/>
        <end position="23"/>
    </location>
</feature>
<feature type="chain" id="PRO_0000016420" description="Interferon tau-9">
    <location>
        <begin position="24"/>
        <end position="195"/>
    </location>
</feature>
<feature type="disulfide bond" evidence="1">
    <location>
        <begin position="24"/>
        <end position="122"/>
    </location>
</feature>
<feature type="disulfide bond" evidence="1">
    <location>
        <begin position="52"/>
        <end position="162"/>
    </location>
</feature>